<proteinExistence type="inferred from homology"/>
<accession>P09554</accession>
<feature type="chain" id="PRO_0000139502" description="Nitrogenase iron protein 5">
    <location>
        <begin position="1"/>
        <end position="273"/>
    </location>
</feature>
<feature type="binding site" evidence="2">
    <location>
        <begin position="8"/>
        <end position="15"/>
    </location>
    <ligand>
        <name>ATP</name>
        <dbReference type="ChEBI" id="CHEBI:30616"/>
    </ligand>
</feature>
<feature type="binding site" evidence="1">
    <location>
        <position position="94"/>
    </location>
    <ligand>
        <name>[4Fe-4S] cluster</name>
        <dbReference type="ChEBI" id="CHEBI:49883"/>
        <note>ligand shared between dimeric partners</note>
    </ligand>
</feature>
<feature type="binding site" evidence="1">
    <location>
        <position position="129"/>
    </location>
    <ligand>
        <name>[4Fe-4S] cluster</name>
        <dbReference type="ChEBI" id="CHEBI:49883"/>
        <note>ligand shared between dimeric partners</note>
    </ligand>
</feature>
<feature type="modified residue" description="ADP-ribosylarginine; by dinitrogenase reductase ADP-ribosyltransferase" evidence="1">
    <location>
        <position position="97"/>
    </location>
</feature>
<name>NIFH5_CLOPA</name>
<reference key="1">
    <citation type="journal article" date="1988" name="Nucleic Acids Res.">
        <title>The presence of five nifH-like sequences in Clostridium pasteurianum: sequence divergence and transcription properties.</title>
        <authorList>
            <person name="Wang S.-Z."/>
            <person name="Chen J.-S."/>
            <person name="Johnson J.L."/>
        </authorList>
    </citation>
    <scope>NUCLEOTIDE SEQUENCE [GENOMIC DNA]</scope>
</reference>
<dbReference type="EC" id="1.18.6.1"/>
<dbReference type="EMBL" id="X07476">
    <property type="protein sequence ID" value="CAA30363.1"/>
    <property type="molecule type" value="Genomic_DNA"/>
</dbReference>
<dbReference type="PIR" id="S02218">
    <property type="entry name" value="S02218"/>
</dbReference>
<dbReference type="SMR" id="P09554"/>
<dbReference type="OrthoDB" id="9778641at2"/>
<dbReference type="GO" id="GO:0051539">
    <property type="term" value="F:4 iron, 4 sulfur cluster binding"/>
    <property type="evidence" value="ECO:0007669"/>
    <property type="project" value="UniProtKB-KW"/>
</dbReference>
<dbReference type="GO" id="GO:0005524">
    <property type="term" value="F:ATP binding"/>
    <property type="evidence" value="ECO:0007669"/>
    <property type="project" value="UniProtKB-UniRule"/>
</dbReference>
<dbReference type="GO" id="GO:0046872">
    <property type="term" value="F:metal ion binding"/>
    <property type="evidence" value="ECO:0007669"/>
    <property type="project" value="UniProtKB-KW"/>
</dbReference>
<dbReference type="GO" id="GO:0016163">
    <property type="term" value="F:nitrogenase activity"/>
    <property type="evidence" value="ECO:0007669"/>
    <property type="project" value="UniProtKB-UniRule"/>
</dbReference>
<dbReference type="GO" id="GO:0009399">
    <property type="term" value="P:nitrogen fixation"/>
    <property type="evidence" value="ECO:0007669"/>
    <property type="project" value="UniProtKB-UniRule"/>
</dbReference>
<dbReference type="CDD" id="cd02040">
    <property type="entry name" value="NifH"/>
    <property type="match status" value="1"/>
</dbReference>
<dbReference type="Gene3D" id="3.40.50.300">
    <property type="entry name" value="P-loop containing nucleotide triphosphate hydrolases"/>
    <property type="match status" value="1"/>
</dbReference>
<dbReference type="HAMAP" id="MF_00533">
    <property type="entry name" value="NifH"/>
    <property type="match status" value="1"/>
</dbReference>
<dbReference type="InterPro" id="IPR030655">
    <property type="entry name" value="NifH/chlL_CS"/>
</dbReference>
<dbReference type="InterPro" id="IPR000392">
    <property type="entry name" value="NifH/frxC"/>
</dbReference>
<dbReference type="InterPro" id="IPR005977">
    <property type="entry name" value="Nitrogenase_Fe_NifH"/>
</dbReference>
<dbReference type="InterPro" id="IPR027417">
    <property type="entry name" value="P-loop_NTPase"/>
</dbReference>
<dbReference type="NCBIfam" id="TIGR01287">
    <property type="entry name" value="nifH"/>
    <property type="match status" value="1"/>
</dbReference>
<dbReference type="PANTHER" id="PTHR42864">
    <property type="entry name" value="LIGHT-INDEPENDENT PROTOCHLOROPHYLLIDE REDUCTASE IRON-SULFUR ATP-BINDING PROTEIN"/>
    <property type="match status" value="1"/>
</dbReference>
<dbReference type="PANTHER" id="PTHR42864:SF2">
    <property type="entry name" value="LIGHT-INDEPENDENT PROTOCHLOROPHYLLIDE REDUCTASE IRON-SULFUR ATP-BINDING PROTEIN"/>
    <property type="match status" value="1"/>
</dbReference>
<dbReference type="Pfam" id="PF00142">
    <property type="entry name" value="Fer4_NifH"/>
    <property type="match status" value="1"/>
</dbReference>
<dbReference type="PIRSF" id="PIRSF000363">
    <property type="entry name" value="Nitrogenase_iron"/>
    <property type="match status" value="1"/>
</dbReference>
<dbReference type="PRINTS" id="PR00091">
    <property type="entry name" value="NITROGNASEII"/>
</dbReference>
<dbReference type="SUPFAM" id="SSF52540">
    <property type="entry name" value="P-loop containing nucleoside triphosphate hydrolases"/>
    <property type="match status" value="1"/>
</dbReference>
<dbReference type="PROSITE" id="PS00746">
    <property type="entry name" value="NIFH_FRXC_1"/>
    <property type="match status" value="1"/>
</dbReference>
<dbReference type="PROSITE" id="PS00692">
    <property type="entry name" value="NIFH_FRXC_2"/>
    <property type="match status" value="1"/>
</dbReference>
<dbReference type="PROSITE" id="PS51026">
    <property type="entry name" value="NIFH_FRXC_3"/>
    <property type="match status" value="1"/>
</dbReference>
<organism>
    <name type="scientific">Clostridium pasteurianum</name>
    <dbReference type="NCBI Taxonomy" id="1501"/>
    <lineage>
        <taxon>Bacteria</taxon>
        <taxon>Bacillati</taxon>
        <taxon>Bacillota</taxon>
        <taxon>Clostridia</taxon>
        <taxon>Eubacteriales</taxon>
        <taxon>Clostridiaceae</taxon>
        <taxon>Clostridium</taxon>
    </lineage>
</organism>
<sequence length="273" mass="29647">MRQVAIYGKGGIGKSTTTQNLTSGLHAMGKTIMVVGCDPKADSTRLLLGGLAQKSVLDTLREEGEDVELDSILKEGYGGIRCVESGGPEPGVGCAGRGIITSINMLEQLGAYTDDLDYVFYDVLGDVVCGGFAMPIREGKAQEIYIVASGEMMALYAANNISKGIQKYAKSGGVRLGGIICNSRKVANEYELLDAFAKELGSQLIHFVPRSPMVTKAEINKQTVIEFDPTCEQAEEYRELARKVDANELFVIPKPMTQERLEEILMEYGLMDL</sequence>
<protein>
    <recommendedName>
        <fullName>Nitrogenase iron protein 5</fullName>
        <ecNumber>1.18.6.1</ecNumber>
    </recommendedName>
    <alternativeName>
        <fullName>Nitrogenase Fe protein 5</fullName>
    </alternativeName>
    <alternativeName>
        <fullName>Nitrogenase component II</fullName>
    </alternativeName>
    <alternativeName>
        <fullName>Nitrogenase reductase</fullName>
    </alternativeName>
</protein>
<comment type="function">
    <text evidence="1">The key enzymatic reactions in nitrogen fixation are catalyzed by the nitrogenase complex, which has 2 components: the iron protein and the molybdenum-iron protein.</text>
</comment>
<comment type="catalytic activity">
    <reaction>
        <text>N2 + 8 reduced [2Fe-2S]-[ferredoxin] + 16 ATP + 16 H2O = H2 + 8 oxidized [2Fe-2S]-[ferredoxin] + 2 NH4(+) + 16 ADP + 16 phosphate + 6 H(+)</text>
        <dbReference type="Rhea" id="RHEA:21448"/>
        <dbReference type="Rhea" id="RHEA-COMP:10000"/>
        <dbReference type="Rhea" id="RHEA-COMP:10001"/>
        <dbReference type="ChEBI" id="CHEBI:15377"/>
        <dbReference type="ChEBI" id="CHEBI:15378"/>
        <dbReference type="ChEBI" id="CHEBI:17997"/>
        <dbReference type="ChEBI" id="CHEBI:18276"/>
        <dbReference type="ChEBI" id="CHEBI:28938"/>
        <dbReference type="ChEBI" id="CHEBI:30616"/>
        <dbReference type="ChEBI" id="CHEBI:33737"/>
        <dbReference type="ChEBI" id="CHEBI:33738"/>
        <dbReference type="ChEBI" id="CHEBI:43474"/>
        <dbReference type="ChEBI" id="CHEBI:456216"/>
        <dbReference type="EC" id="1.18.6.1"/>
    </reaction>
</comment>
<comment type="cofactor">
    <cofactor evidence="1">
        <name>[4Fe-4S] cluster</name>
        <dbReference type="ChEBI" id="CHEBI:49883"/>
    </cofactor>
    <text evidence="1">Binds 1 [4Fe-4S] cluster per dimer.</text>
</comment>
<comment type="subunit">
    <text evidence="1">Homodimer.</text>
</comment>
<comment type="PTM">
    <text evidence="1">The reversible ADP-ribosylation of Arg-97 inactivates the nitrogenase reductase and regulates nitrogenase activity.</text>
</comment>
<comment type="similarity">
    <text evidence="3">Belongs to the NifH/BchL/ChlL family.</text>
</comment>
<evidence type="ECO:0000250" key="1"/>
<evidence type="ECO:0000255" key="2"/>
<evidence type="ECO:0000305" key="3"/>
<keyword id="KW-0004">4Fe-4S</keyword>
<keyword id="KW-0013">ADP-ribosylation</keyword>
<keyword id="KW-0067">ATP-binding</keyword>
<keyword id="KW-0408">Iron</keyword>
<keyword id="KW-0411">Iron-sulfur</keyword>
<keyword id="KW-0479">Metal-binding</keyword>
<keyword id="KW-0535">Nitrogen fixation</keyword>
<keyword id="KW-0547">Nucleotide-binding</keyword>
<keyword id="KW-0560">Oxidoreductase</keyword>
<gene>
    <name type="primary">nifH5</name>
</gene>